<keyword id="KW-0067">ATP-binding</keyword>
<keyword id="KW-0963">Cytoplasm</keyword>
<keyword id="KW-0547">Nucleotide-binding</keyword>
<keyword id="KW-0694">RNA-binding</keyword>
<keyword id="KW-0784">Thiamine biosynthesis</keyword>
<keyword id="KW-0808">Transferase</keyword>
<keyword id="KW-0820">tRNA-binding</keyword>
<comment type="function">
    <text evidence="1">Catalyzes the ATP-dependent transfer of a sulfur to tRNA to produce 4-thiouridine in position 8 of tRNAs, which functions as a near-UV photosensor. Also catalyzes the transfer of sulfur to the sulfur carrier protein ThiS, forming ThiS-thiocarboxylate. This is a step in the synthesis of thiazole, in the thiamine biosynthesis pathway. The sulfur is donated as persulfide by IscS.</text>
</comment>
<comment type="catalytic activity">
    <reaction evidence="1">
        <text>[ThiI sulfur-carrier protein]-S-sulfanyl-L-cysteine + a uridine in tRNA + 2 reduced [2Fe-2S]-[ferredoxin] + ATP + H(+) = [ThiI sulfur-carrier protein]-L-cysteine + a 4-thiouridine in tRNA + 2 oxidized [2Fe-2S]-[ferredoxin] + AMP + diphosphate</text>
        <dbReference type="Rhea" id="RHEA:24176"/>
        <dbReference type="Rhea" id="RHEA-COMP:10000"/>
        <dbReference type="Rhea" id="RHEA-COMP:10001"/>
        <dbReference type="Rhea" id="RHEA-COMP:13337"/>
        <dbReference type="Rhea" id="RHEA-COMP:13338"/>
        <dbReference type="Rhea" id="RHEA-COMP:13339"/>
        <dbReference type="Rhea" id="RHEA-COMP:13340"/>
        <dbReference type="ChEBI" id="CHEBI:15378"/>
        <dbReference type="ChEBI" id="CHEBI:29950"/>
        <dbReference type="ChEBI" id="CHEBI:30616"/>
        <dbReference type="ChEBI" id="CHEBI:33019"/>
        <dbReference type="ChEBI" id="CHEBI:33737"/>
        <dbReference type="ChEBI" id="CHEBI:33738"/>
        <dbReference type="ChEBI" id="CHEBI:61963"/>
        <dbReference type="ChEBI" id="CHEBI:65315"/>
        <dbReference type="ChEBI" id="CHEBI:136798"/>
        <dbReference type="ChEBI" id="CHEBI:456215"/>
        <dbReference type="EC" id="2.8.1.4"/>
    </reaction>
</comment>
<comment type="catalytic activity">
    <reaction evidence="1">
        <text>[ThiS sulfur-carrier protein]-C-terminal Gly-Gly-AMP + S-sulfanyl-L-cysteinyl-[cysteine desulfurase] + AH2 = [ThiS sulfur-carrier protein]-C-terminal-Gly-aminoethanethioate + L-cysteinyl-[cysteine desulfurase] + A + AMP + 2 H(+)</text>
        <dbReference type="Rhea" id="RHEA:43340"/>
        <dbReference type="Rhea" id="RHEA-COMP:12157"/>
        <dbReference type="Rhea" id="RHEA-COMP:12158"/>
        <dbReference type="Rhea" id="RHEA-COMP:12910"/>
        <dbReference type="Rhea" id="RHEA-COMP:19908"/>
        <dbReference type="ChEBI" id="CHEBI:13193"/>
        <dbReference type="ChEBI" id="CHEBI:15378"/>
        <dbReference type="ChEBI" id="CHEBI:17499"/>
        <dbReference type="ChEBI" id="CHEBI:29950"/>
        <dbReference type="ChEBI" id="CHEBI:61963"/>
        <dbReference type="ChEBI" id="CHEBI:90618"/>
        <dbReference type="ChEBI" id="CHEBI:232372"/>
        <dbReference type="ChEBI" id="CHEBI:456215"/>
    </reaction>
</comment>
<comment type="pathway">
    <text evidence="1">Cofactor biosynthesis; thiamine diphosphate biosynthesis.</text>
</comment>
<comment type="subcellular location">
    <subcellularLocation>
        <location evidence="1">Cytoplasm</location>
    </subcellularLocation>
</comment>
<comment type="similarity">
    <text evidence="1">Belongs to the ThiI family.</text>
</comment>
<name>THII_CLOBA</name>
<evidence type="ECO:0000255" key="1">
    <source>
        <dbReference type="HAMAP-Rule" id="MF_00021"/>
    </source>
</evidence>
<proteinExistence type="inferred from homology"/>
<organism>
    <name type="scientific">Clostridium botulinum (strain Alaska E43 / Type E3)</name>
    <dbReference type="NCBI Taxonomy" id="508767"/>
    <lineage>
        <taxon>Bacteria</taxon>
        <taxon>Bacillati</taxon>
        <taxon>Bacillota</taxon>
        <taxon>Clostridia</taxon>
        <taxon>Eubacteriales</taxon>
        <taxon>Clostridiaceae</taxon>
        <taxon>Clostridium</taxon>
    </lineage>
</organism>
<reference key="1">
    <citation type="submission" date="2008-05" db="EMBL/GenBank/DDBJ databases">
        <title>Complete genome sequence of Clostridium botulinum E3 str. Alaska E43.</title>
        <authorList>
            <person name="Brinkac L.M."/>
            <person name="Brown J.L."/>
            <person name="Bruce D."/>
            <person name="Detter C."/>
            <person name="Munk C."/>
            <person name="Smith L.A."/>
            <person name="Smith T.J."/>
            <person name="Sutton G."/>
            <person name="Brettin T.S."/>
        </authorList>
    </citation>
    <scope>NUCLEOTIDE SEQUENCE [LARGE SCALE GENOMIC DNA]</scope>
    <source>
        <strain>Alaska E43 / Type E3</strain>
    </source>
</reference>
<protein>
    <recommendedName>
        <fullName evidence="1">Probable tRNA sulfurtransferase</fullName>
        <ecNumber evidence="1">2.8.1.4</ecNumber>
    </recommendedName>
    <alternativeName>
        <fullName evidence="1">Sulfur carrier protein ThiS sulfurtransferase</fullName>
    </alternativeName>
    <alternativeName>
        <fullName evidence="1">Thiamine biosynthesis protein ThiI</fullName>
    </alternativeName>
    <alternativeName>
        <fullName evidence="1">tRNA 4-thiouridine synthase</fullName>
    </alternativeName>
</protein>
<accession>B2UX29</accession>
<sequence length="385" mass="43745">MEKLILVKYAPEIFLKGLNRNKFEKRLRDNIGKKLEGIKIEFIHDSGRYFIKTNEINESIKRLSNVFGVSEVAVVDVVEIDMDSIKKSSLEKLIEAEGKTFKVSTNRANKNFEGNSTDISRDIGAYILSNYNDEMNVDVKTPDILINVEIRNKNAYVWSNKDITKGVAGLPYGMNGSTMLMLSGGIDSPVAGYLMAKRGVELNCVYYHSHPYTSERAKDKVKDLAKILASYTEKINLYVVPFTEIQMAILDKCREDELTIIMRRFMMRVACKIAEEKGIQSVTSGESIGQVASQTMEGLIVSNDCADRPVFRPLIAMDKTDIMDIARKIETYETSILPYEDCCTIFVPKHPKTKPRVDSIREEEKKLNIDELVRKAIDEMENIVY</sequence>
<dbReference type="EC" id="2.8.1.4" evidence="1"/>
<dbReference type="EMBL" id="CP001078">
    <property type="protein sequence ID" value="ACD53918.1"/>
    <property type="molecule type" value="Genomic_DNA"/>
</dbReference>
<dbReference type="RefSeq" id="WP_012451727.1">
    <property type="nucleotide sequence ID" value="NC_010723.1"/>
</dbReference>
<dbReference type="SMR" id="B2UX29"/>
<dbReference type="KEGG" id="cbt:CLH_2634"/>
<dbReference type="HOGENOM" id="CLU_037952_4_0_9"/>
<dbReference type="UniPathway" id="UPA00060"/>
<dbReference type="GO" id="GO:0005829">
    <property type="term" value="C:cytosol"/>
    <property type="evidence" value="ECO:0007669"/>
    <property type="project" value="TreeGrafter"/>
</dbReference>
<dbReference type="GO" id="GO:0005524">
    <property type="term" value="F:ATP binding"/>
    <property type="evidence" value="ECO:0007669"/>
    <property type="project" value="UniProtKB-UniRule"/>
</dbReference>
<dbReference type="GO" id="GO:0004810">
    <property type="term" value="F:CCA tRNA nucleotidyltransferase activity"/>
    <property type="evidence" value="ECO:0007669"/>
    <property type="project" value="InterPro"/>
</dbReference>
<dbReference type="GO" id="GO:0000049">
    <property type="term" value="F:tRNA binding"/>
    <property type="evidence" value="ECO:0007669"/>
    <property type="project" value="UniProtKB-UniRule"/>
</dbReference>
<dbReference type="GO" id="GO:0140741">
    <property type="term" value="F:tRNA-uracil-4 sulfurtransferase activity"/>
    <property type="evidence" value="ECO:0007669"/>
    <property type="project" value="UniProtKB-EC"/>
</dbReference>
<dbReference type="GO" id="GO:0009228">
    <property type="term" value="P:thiamine biosynthetic process"/>
    <property type="evidence" value="ECO:0007669"/>
    <property type="project" value="UniProtKB-KW"/>
</dbReference>
<dbReference type="GO" id="GO:0009229">
    <property type="term" value="P:thiamine diphosphate biosynthetic process"/>
    <property type="evidence" value="ECO:0007669"/>
    <property type="project" value="UniProtKB-UniRule"/>
</dbReference>
<dbReference type="GO" id="GO:0052837">
    <property type="term" value="P:thiazole biosynthetic process"/>
    <property type="evidence" value="ECO:0007669"/>
    <property type="project" value="TreeGrafter"/>
</dbReference>
<dbReference type="GO" id="GO:0002937">
    <property type="term" value="P:tRNA 4-thiouridine biosynthesis"/>
    <property type="evidence" value="ECO:0007669"/>
    <property type="project" value="TreeGrafter"/>
</dbReference>
<dbReference type="CDD" id="cd01712">
    <property type="entry name" value="PPase_ThiI"/>
    <property type="match status" value="1"/>
</dbReference>
<dbReference type="CDD" id="cd11716">
    <property type="entry name" value="THUMP_ThiI"/>
    <property type="match status" value="1"/>
</dbReference>
<dbReference type="FunFam" id="3.40.50.620:FF:000053">
    <property type="entry name" value="Probable tRNA sulfurtransferase"/>
    <property type="match status" value="1"/>
</dbReference>
<dbReference type="Gene3D" id="3.30.2130.30">
    <property type="match status" value="1"/>
</dbReference>
<dbReference type="Gene3D" id="3.40.50.620">
    <property type="entry name" value="HUPs"/>
    <property type="match status" value="1"/>
</dbReference>
<dbReference type="HAMAP" id="MF_00021">
    <property type="entry name" value="ThiI"/>
    <property type="match status" value="1"/>
</dbReference>
<dbReference type="InterPro" id="IPR014729">
    <property type="entry name" value="Rossmann-like_a/b/a_fold"/>
</dbReference>
<dbReference type="InterPro" id="IPR020536">
    <property type="entry name" value="ThiI_AANH"/>
</dbReference>
<dbReference type="InterPro" id="IPR054173">
    <property type="entry name" value="ThiI_fer"/>
</dbReference>
<dbReference type="InterPro" id="IPR049961">
    <property type="entry name" value="ThiI_N"/>
</dbReference>
<dbReference type="InterPro" id="IPR004114">
    <property type="entry name" value="THUMP_dom"/>
</dbReference>
<dbReference type="InterPro" id="IPR049962">
    <property type="entry name" value="THUMP_ThiI"/>
</dbReference>
<dbReference type="InterPro" id="IPR003720">
    <property type="entry name" value="tRNA_STrfase"/>
</dbReference>
<dbReference type="InterPro" id="IPR050102">
    <property type="entry name" value="tRNA_sulfurtransferase_ThiI"/>
</dbReference>
<dbReference type="NCBIfam" id="TIGR00342">
    <property type="entry name" value="tRNA uracil 4-sulfurtransferase ThiI"/>
    <property type="match status" value="1"/>
</dbReference>
<dbReference type="PANTHER" id="PTHR43209">
    <property type="entry name" value="TRNA SULFURTRANSFERASE"/>
    <property type="match status" value="1"/>
</dbReference>
<dbReference type="PANTHER" id="PTHR43209:SF1">
    <property type="entry name" value="TRNA SULFURTRANSFERASE"/>
    <property type="match status" value="1"/>
</dbReference>
<dbReference type="Pfam" id="PF02568">
    <property type="entry name" value="ThiI"/>
    <property type="match status" value="1"/>
</dbReference>
<dbReference type="Pfam" id="PF22025">
    <property type="entry name" value="ThiI_fer"/>
    <property type="match status" value="1"/>
</dbReference>
<dbReference type="Pfam" id="PF02926">
    <property type="entry name" value="THUMP"/>
    <property type="match status" value="1"/>
</dbReference>
<dbReference type="SMART" id="SM00981">
    <property type="entry name" value="THUMP"/>
    <property type="match status" value="1"/>
</dbReference>
<dbReference type="SUPFAM" id="SSF52402">
    <property type="entry name" value="Adenine nucleotide alpha hydrolases-like"/>
    <property type="match status" value="1"/>
</dbReference>
<dbReference type="SUPFAM" id="SSF143437">
    <property type="entry name" value="THUMP domain-like"/>
    <property type="match status" value="1"/>
</dbReference>
<dbReference type="PROSITE" id="PS51165">
    <property type="entry name" value="THUMP"/>
    <property type="match status" value="1"/>
</dbReference>
<gene>
    <name evidence="1" type="primary">thiI</name>
    <name type="ordered locus">CLH_2634</name>
</gene>
<feature type="chain" id="PRO_1000090010" description="Probable tRNA sulfurtransferase">
    <location>
        <begin position="1"/>
        <end position="385"/>
    </location>
</feature>
<feature type="domain" description="THUMP" evidence="1">
    <location>
        <begin position="57"/>
        <end position="161"/>
    </location>
</feature>
<feature type="binding site" evidence="1">
    <location>
        <begin position="181"/>
        <end position="182"/>
    </location>
    <ligand>
        <name>ATP</name>
        <dbReference type="ChEBI" id="CHEBI:30616"/>
    </ligand>
</feature>
<feature type="binding site" evidence="1">
    <location>
        <begin position="206"/>
        <end position="207"/>
    </location>
    <ligand>
        <name>ATP</name>
        <dbReference type="ChEBI" id="CHEBI:30616"/>
    </ligand>
</feature>
<feature type="binding site" evidence="1">
    <location>
        <position position="263"/>
    </location>
    <ligand>
        <name>ATP</name>
        <dbReference type="ChEBI" id="CHEBI:30616"/>
    </ligand>
</feature>
<feature type="binding site" evidence="1">
    <location>
        <position position="285"/>
    </location>
    <ligand>
        <name>ATP</name>
        <dbReference type="ChEBI" id="CHEBI:30616"/>
    </ligand>
</feature>
<feature type="binding site" evidence="1">
    <location>
        <position position="294"/>
    </location>
    <ligand>
        <name>ATP</name>
        <dbReference type="ChEBI" id="CHEBI:30616"/>
    </ligand>
</feature>